<evidence type="ECO:0000250" key="1"/>
<evidence type="ECO:0000255" key="2">
    <source>
        <dbReference type="PROSITE-ProRule" id="PRU00266"/>
    </source>
</evidence>
<evidence type="ECO:0000256" key="3">
    <source>
        <dbReference type="SAM" id="MobiDB-lite"/>
    </source>
</evidence>
<evidence type="ECO:0000305" key="4"/>
<sequence length="606" mass="66504">MANPKEKTPMCLVNELARFNRIQPQYKLLNEKGPAHAKIFTVQLCLGNQVWESEGSSIKKAQHSTATKALAESSLPRPPPRSPKADSNSNPGSITPTVELNGLAMKRGEPAIYRPLDPKPIPNYRANYNFRGMFNQRYHYPVPKVFYVQLTVGNNEFIGEGRTRQAARHNAAMKALQALKNEPIPERPPQCSEEKKETEENSDASKSEISLVYEIALKRNLPVNFEVLKESGPPHMKSFLTRVTVGEFSAEGEGNSKKLSKKRAALSILQELKKLPVLPVVEKPKVHYKKRPKTILKTGPEYGQGMNPISRLAQIQQAKKEKEPEYMLLSERGMPRRREFIMQVKVGTEVTTGTGPNKKVAKRNAAEAMLLQLGYKASTPLQNTPEKMDNKGWNGQRAAFPETTSNTQKGILHLSPDVYQEMEASRNKGVPGAPGNFPTAKEIGQGSAGPFCTPSVGNTATIAKELLLSGTSPTAEALVLKGKAPALACGSIQPSQQLEYLAHIQGFQVQYSDRQTDKEFMTYLTLSPVQMTFHGIGSSIPASHDQAALSALKQLSEQGLDPVDGPIKVENGSCDIQAKRLAERTESKPTNSGTTAQDCKDSKAVV</sequence>
<feature type="chain" id="PRO_0000072245" description="Double-stranded RNA-binding protein Staufen homolog 2">
    <location>
        <begin position="1"/>
        <end position="606"/>
    </location>
</feature>
<feature type="domain" description="DRBM 1" evidence="2">
    <location>
        <begin position="8"/>
        <end position="75"/>
    </location>
</feature>
<feature type="domain" description="DRBM 2" evidence="2">
    <location>
        <begin position="95"/>
        <end position="181"/>
    </location>
</feature>
<feature type="domain" description="DRBM 3" evidence="2">
    <location>
        <begin position="207"/>
        <end position="274"/>
    </location>
</feature>
<feature type="domain" description="DRBM 4" evidence="2">
    <location>
        <begin position="307"/>
        <end position="375"/>
    </location>
</feature>
<feature type="domain" description="DRBM 5" evidence="2">
    <location>
        <begin position="493"/>
        <end position="557"/>
    </location>
</feature>
<feature type="region of interest" description="Disordered" evidence="3">
    <location>
        <begin position="57"/>
        <end position="97"/>
    </location>
</feature>
<feature type="region of interest" description="Disordered" evidence="3">
    <location>
        <begin position="177"/>
        <end position="205"/>
    </location>
</feature>
<feature type="region of interest" description="Disordered" evidence="3">
    <location>
        <begin position="580"/>
        <end position="606"/>
    </location>
</feature>
<feature type="compositionally biased region" description="Polar residues" evidence="3">
    <location>
        <begin position="85"/>
        <end position="97"/>
    </location>
</feature>
<feature type="compositionally biased region" description="Basic and acidic residues" evidence="3">
    <location>
        <begin position="192"/>
        <end position="205"/>
    </location>
</feature>
<feature type="compositionally biased region" description="Polar residues" evidence="3">
    <location>
        <begin position="588"/>
        <end position="597"/>
    </location>
</feature>
<comment type="function">
    <text evidence="1">RNA-binding protein required for the microtubule-dependent transport of RNAs within polarized cell types.</text>
</comment>
<comment type="domain">
    <text evidence="1">The DRBM 3 domain appears to be the major RNA-binding determinant.</text>
</comment>
<comment type="sequence caution" evidence="4">
    <conflict type="erroneous initiation">
        <sequence resource="EMBL-CDS" id="AAH45292"/>
    </conflict>
</comment>
<protein>
    <recommendedName>
        <fullName>Double-stranded RNA-binding protein Staufen homolog 2</fullName>
    </recommendedName>
</protein>
<name>STAU2_DANRE</name>
<accession>Q7ZW47</accession>
<organism>
    <name type="scientific">Danio rerio</name>
    <name type="common">Zebrafish</name>
    <name type="synonym">Brachydanio rerio</name>
    <dbReference type="NCBI Taxonomy" id="7955"/>
    <lineage>
        <taxon>Eukaryota</taxon>
        <taxon>Metazoa</taxon>
        <taxon>Chordata</taxon>
        <taxon>Craniata</taxon>
        <taxon>Vertebrata</taxon>
        <taxon>Euteleostomi</taxon>
        <taxon>Actinopterygii</taxon>
        <taxon>Neopterygii</taxon>
        <taxon>Teleostei</taxon>
        <taxon>Ostariophysi</taxon>
        <taxon>Cypriniformes</taxon>
        <taxon>Danionidae</taxon>
        <taxon>Danioninae</taxon>
        <taxon>Danio</taxon>
    </lineage>
</organism>
<dbReference type="EMBL" id="BC045292">
    <property type="protein sequence ID" value="AAH45292.1"/>
    <property type="status" value="ALT_INIT"/>
    <property type="molecule type" value="mRNA"/>
</dbReference>
<dbReference type="SMR" id="Q7ZW47"/>
<dbReference type="FunCoup" id="Q7ZW47">
    <property type="interactions" value="1959"/>
</dbReference>
<dbReference type="STRING" id="7955.ENSDARP00000116175"/>
<dbReference type="PaxDb" id="7955-ENSDARP00000116175"/>
<dbReference type="AGR" id="ZFIN:ZDB-GENE-040426-687"/>
<dbReference type="ZFIN" id="ZDB-GENE-040426-687">
    <property type="gene designation" value="stau2"/>
</dbReference>
<dbReference type="eggNOG" id="KOG3732">
    <property type="taxonomic scope" value="Eukaryota"/>
</dbReference>
<dbReference type="InParanoid" id="Q7ZW47"/>
<dbReference type="PhylomeDB" id="Q7ZW47"/>
<dbReference type="PRO" id="PR:Q7ZW47"/>
<dbReference type="Proteomes" id="UP000000437">
    <property type="component" value="Unplaced"/>
</dbReference>
<dbReference type="GO" id="GO:0010494">
    <property type="term" value="C:cytoplasmic stress granule"/>
    <property type="evidence" value="ECO:0000318"/>
    <property type="project" value="GO_Central"/>
</dbReference>
<dbReference type="GO" id="GO:0032839">
    <property type="term" value="C:dendrite cytoplasm"/>
    <property type="evidence" value="ECO:0007669"/>
    <property type="project" value="GOC"/>
</dbReference>
<dbReference type="GO" id="GO:0005874">
    <property type="term" value="C:microtubule"/>
    <property type="evidence" value="ECO:0007669"/>
    <property type="project" value="UniProtKB-KW"/>
</dbReference>
<dbReference type="GO" id="GO:0043005">
    <property type="term" value="C:neuron projection"/>
    <property type="evidence" value="ECO:0000318"/>
    <property type="project" value="GO_Central"/>
</dbReference>
<dbReference type="GO" id="GO:0043025">
    <property type="term" value="C:neuronal cell body"/>
    <property type="evidence" value="ECO:0000318"/>
    <property type="project" value="GO_Central"/>
</dbReference>
<dbReference type="GO" id="GO:0005886">
    <property type="term" value="C:plasma membrane"/>
    <property type="evidence" value="ECO:0000318"/>
    <property type="project" value="GO_Central"/>
</dbReference>
<dbReference type="GO" id="GO:0003725">
    <property type="term" value="F:double-stranded RNA binding"/>
    <property type="evidence" value="ECO:0000318"/>
    <property type="project" value="GO_Central"/>
</dbReference>
<dbReference type="GO" id="GO:0003729">
    <property type="term" value="F:mRNA binding"/>
    <property type="evidence" value="ECO:0000318"/>
    <property type="project" value="GO_Central"/>
</dbReference>
<dbReference type="GO" id="GO:0098964">
    <property type="term" value="P:anterograde dendritic transport of messenger ribonucleoprotein complex"/>
    <property type="evidence" value="ECO:0000318"/>
    <property type="project" value="GO_Central"/>
</dbReference>
<dbReference type="GO" id="GO:0007281">
    <property type="term" value="P:germ cell development"/>
    <property type="evidence" value="ECO:0000315"/>
    <property type="project" value="ZFIN"/>
</dbReference>
<dbReference type="GO" id="GO:0008354">
    <property type="term" value="P:germ cell migration"/>
    <property type="evidence" value="ECO:0000315"/>
    <property type="project" value="ZFIN"/>
</dbReference>
<dbReference type="GO" id="GO:0008298">
    <property type="term" value="P:intracellular mRNA localization"/>
    <property type="evidence" value="ECO:0000318"/>
    <property type="project" value="GO_Central"/>
</dbReference>
<dbReference type="GO" id="GO:0035418">
    <property type="term" value="P:protein localization to synapse"/>
    <property type="evidence" value="ECO:0000318"/>
    <property type="project" value="GO_Central"/>
</dbReference>
<dbReference type="CDD" id="cd19880">
    <property type="entry name" value="DSRM_STAU2_rpt1"/>
    <property type="match status" value="1"/>
</dbReference>
<dbReference type="CDD" id="cd19882">
    <property type="entry name" value="DSRM_STAU2_rpt2"/>
    <property type="match status" value="1"/>
</dbReference>
<dbReference type="CDD" id="cd19884">
    <property type="entry name" value="DSRM_STAU2_rpt3"/>
    <property type="match status" value="1"/>
</dbReference>
<dbReference type="CDD" id="cd19886">
    <property type="entry name" value="DSRM_STAU2_rpt4"/>
    <property type="match status" value="1"/>
</dbReference>
<dbReference type="CDD" id="cd19888">
    <property type="entry name" value="DSRM_STAU2_rpt5"/>
    <property type="match status" value="1"/>
</dbReference>
<dbReference type="FunFam" id="3.30.160.20:FF:000073">
    <property type="entry name" value="Double-stranded RNA-binding protein Staufen homolog"/>
    <property type="match status" value="1"/>
</dbReference>
<dbReference type="FunFam" id="3.30.160.20:FF:000007">
    <property type="entry name" value="Double-stranded RNA-binding protein Staufen homolog 1"/>
    <property type="match status" value="1"/>
</dbReference>
<dbReference type="FunFam" id="3.30.160.20:FF:000024">
    <property type="entry name" value="double-stranded RNA-binding protein Staufen homolog 1 isoform X1"/>
    <property type="match status" value="1"/>
</dbReference>
<dbReference type="FunFam" id="3.30.160.20:FF:000013">
    <property type="entry name" value="double-stranded RNA-binding protein Staufen homolog 2 isoform X3"/>
    <property type="match status" value="1"/>
</dbReference>
<dbReference type="Gene3D" id="3.30.160.20">
    <property type="match status" value="5"/>
</dbReference>
<dbReference type="Gene3D" id="6.10.250.1360">
    <property type="match status" value="1"/>
</dbReference>
<dbReference type="InterPro" id="IPR051740">
    <property type="entry name" value="DRBM-containing_protein"/>
</dbReference>
<dbReference type="InterPro" id="IPR014720">
    <property type="entry name" value="dsRBD_dom"/>
</dbReference>
<dbReference type="InterPro" id="IPR044476">
    <property type="entry name" value="STAU2_DSRM_1"/>
</dbReference>
<dbReference type="InterPro" id="IPR044464">
    <property type="entry name" value="STAU2_DSRM_2"/>
</dbReference>
<dbReference type="InterPro" id="IPR044473">
    <property type="entry name" value="STAU2_DSRM_3"/>
</dbReference>
<dbReference type="InterPro" id="IPR044474">
    <property type="entry name" value="STAU2_DSRM_4"/>
</dbReference>
<dbReference type="InterPro" id="IPR032478">
    <property type="entry name" value="Staufen_C"/>
</dbReference>
<dbReference type="PANTHER" id="PTHR46054:SF1">
    <property type="entry name" value="DOUBLE-STRANDED RNA-BINDING PROTEIN STAUFEN HOMOLOG 2"/>
    <property type="match status" value="1"/>
</dbReference>
<dbReference type="PANTHER" id="PTHR46054">
    <property type="entry name" value="MATERNAL EFFECT PROTEIN STAUFEN"/>
    <property type="match status" value="1"/>
</dbReference>
<dbReference type="Pfam" id="PF00035">
    <property type="entry name" value="dsrm"/>
    <property type="match status" value="4"/>
</dbReference>
<dbReference type="Pfam" id="PF16482">
    <property type="entry name" value="Staufen_C"/>
    <property type="match status" value="1"/>
</dbReference>
<dbReference type="SMART" id="SM00358">
    <property type="entry name" value="DSRM"/>
    <property type="match status" value="5"/>
</dbReference>
<dbReference type="SUPFAM" id="SSF54768">
    <property type="entry name" value="dsRNA-binding domain-like"/>
    <property type="match status" value="4"/>
</dbReference>
<dbReference type="PROSITE" id="PS50137">
    <property type="entry name" value="DS_RBD"/>
    <property type="match status" value="5"/>
</dbReference>
<gene>
    <name type="primary">stau2</name>
    <name type="ORF">zgc:55287</name>
</gene>
<reference key="1">
    <citation type="submission" date="2003-01" db="EMBL/GenBank/DDBJ databases">
        <authorList>
            <consortium name="NIH - Zebrafish Gene Collection (ZGC) project"/>
        </authorList>
    </citation>
    <scope>NUCLEOTIDE SEQUENCE [LARGE SCALE MRNA]</scope>
    <source>
        <strain>AB</strain>
    </source>
</reference>
<proteinExistence type="evidence at transcript level"/>
<keyword id="KW-0493">Microtubule</keyword>
<keyword id="KW-1185">Reference proteome</keyword>
<keyword id="KW-0677">Repeat</keyword>
<keyword id="KW-0694">RNA-binding</keyword>
<keyword id="KW-0813">Transport</keyword>